<feature type="chain" id="PRO_1000139836" description="Chitooligosaccharide deacetylase">
    <location>
        <begin position="1"/>
        <end position="252"/>
    </location>
</feature>
<feature type="binding site" evidence="1">
    <location>
        <position position="61"/>
    </location>
    <ligand>
        <name>Mg(2+)</name>
        <dbReference type="ChEBI" id="CHEBI:18420"/>
    </ligand>
</feature>
<feature type="binding site" evidence="1">
    <location>
        <position position="125"/>
    </location>
    <ligand>
        <name>Mg(2+)</name>
        <dbReference type="ChEBI" id="CHEBI:18420"/>
    </ligand>
</feature>
<reference key="1">
    <citation type="journal article" date="2009" name="BMC Genomics">
        <title>Pseudogene accumulation in the evolutionary histories of Salmonella enterica serovars Paratyphi A and Typhi.</title>
        <authorList>
            <person name="Holt K.E."/>
            <person name="Thomson N.R."/>
            <person name="Wain J."/>
            <person name="Langridge G.C."/>
            <person name="Hasan R."/>
            <person name="Bhutta Z.A."/>
            <person name="Quail M.A."/>
            <person name="Norbertczak H."/>
            <person name="Walker D."/>
            <person name="Simmonds M."/>
            <person name="White B."/>
            <person name="Bason N."/>
            <person name="Mungall K."/>
            <person name="Dougan G."/>
            <person name="Parkhill J."/>
        </authorList>
    </citation>
    <scope>NUCLEOTIDE SEQUENCE [LARGE SCALE GENOMIC DNA]</scope>
    <source>
        <strain>AKU_12601</strain>
    </source>
</reference>
<gene>
    <name evidence="1" type="primary">chbG</name>
    <name type="ordered locus">SSPA1418</name>
</gene>
<dbReference type="EC" id="3.5.1.105" evidence="1"/>
<dbReference type="EMBL" id="FM200053">
    <property type="protein sequence ID" value="CAR59597.1"/>
    <property type="molecule type" value="Genomic_DNA"/>
</dbReference>
<dbReference type="RefSeq" id="WP_000442730.1">
    <property type="nucleotide sequence ID" value="NC_011147.1"/>
</dbReference>
<dbReference type="SMR" id="B5BA58"/>
<dbReference type="KEGG" id="sek:SSPA1418"/>
<dbReference type="HOGENOM" id="CLU_064244_4_1_6"/>
<dbReference type="UniPathway" id="UPA00349"/>
<dbReference type="Proteomes" id="UP000001869">
    <property type="component" value="Chromosome"/>
</dbReference>
<dbReference type="GO" id="GO:0005737">
    <property type="term" value="C:cytoplasm"/>
    <property type="evidence" value="ECO:0007669"/>
    <property type="project" value="UniProtKB-SubCell"/>
</dbReference>
<dbReference type="GO" id="GO:0036311">
    <property type="term" value="F:chitin disaccharide deacetylase activity"/>
    <property type="evidence" value="ECO:0007669"/>
    <property type="project" value="UniProtKB-UniRule"/>
</dbReference>
<dbReference type="GO" id="GO:0019213">
    <property type="term" value="F:deacetylase activity"/>
    <property type="evidence" value="ECO:0007669"/>
    <property type="project" value="TreeGrafter"/>
</dbReference>
<dbReference type="GO" id="GO:0046872">
    <property type="term" value="F:metal ion binding"/>
    <property type="evidence" value="ECO:0007669"/>
    <property type="project" value="UniProtKB-KW"/>
</dbReference>
<dbReference type="GO" id="GO:0006032">
    <property type="term" value="P:chitin catabolic process"/>
    <property type="evidence" value="ECO:0007669"/>
    <property type="project" value="UniProtKB-UniPathway"/>
</dbReference>
<dbReference type="GO" id="GO:0052777">
    <property type="term" value="P:diacetylchitobiose catabolic process"/>
    <property type="evidence" value="ECO:0007669"/>
    <property type="project" value="UniProtKB-UniRule"/>
</dbReference>
<dbReference type="GO" id="GO:0000272">
    <property type="term" value="P:polysaccharide catabolic process"/>
    <property type="evidence" value="ECO:0007669"/>
    <property type="project" value="UniProtKB-UniRule"/>
</dbReference>
<dbReference type="CDD" id="cd10803">
    <property type="entry name" value="YdjC_EF3048_like"/>
    <property type="match status" value="1"/>
</dbReference>
<dbReference type="FunFam" id="3.20.20.370:FF:000001">
    <property type="entry name" value="Chitooligosaccharide deacetylase"/>
    <property type="match status" value="1"/>
</dbReference>
<dbReference type="Gene3D" id="3.20.20.370">
    <property type="entry name" value="Glycoside hydrolase/deacetylase"/>
    <property type="match status" value="1"/>
</dbReference>
<dbReference type="HAMAP" id="MF_01246">
    <property type="entry name" value="COD"/>
    <property type="match status" value="1"/>
</dbReference>
<dbReference type="InterPro" id="IPR022948">
    <property type="entry name" value="COD_ChbG_bac"/>
</dbReference>
<dbReference type="InterPro" id="IPR011330">
    <property type="entry name" value="Glyco_hydro/deAcase_b/a-brl"/>
</dbReference>
<dbReference type="InterPro" id="IPR006879">
    <property type="entry name" value="YdjC-like"/>
</dbReference>
<dbReference type="NCBIfam" id="NF002559">
    <property type="entry name" value="PRK02134.1"/>
    <property type="match status" value="1"/>
</dbReference>
<dbReference type="PANTHER" id="PTHR31609:SF1">
    <property type="entry name" value="CARBOHYDRATE DEACETYLASE"/>
    <property type="match status" value="1"/>
</dbReference>
<dbReference type="PANTHER" id="PTHR31609">
    <property type="entry name" value="YDJC DEACETYLASE FAMILY MEMBER"/>
    <property type="match status" value="1"/>
</dbReference>
<dbReference type="Pfam" id="PF04794">
    <property type="entry name" value="YdjC"/>
    <property type="match status" value="1"/>
</dbReference>
<dbReference type="SUPFAM" id="SSF88713">
    <property type="entry name" value="Glycoside hydrolase/deacetylase"/>
    <property type="match status" value="1"/>
</dbReference>
<proteinExistence type="inferred from homology"/>
<comment type="function">
    <text evidence="1">Involved in the degradation of chitin. ChbG is essential for growth on the acetylated chitooligosaccharides chitobiose and chitotriose but is dispensable for growth on cellobiose and chitosan dimer, the deacetylated form of chitobiose. Deacetylation of chitobiose-6-P and chitotriose-6-P is necessary for both the activation of the chb promoter by the regulatory protein ChbR and the hydrolysis of phosphorylated beta-glucosides by the phospho-beta-glucosidase ChbF. Catalyzes the removal of only one acetyl group from chitobiose-6-P to yield monoacetylchitobiose-6-P, the inducer of ChbR and the substrate of ChbF.</text>
</comment>
<comment type="catalytic activity">
    <reaction evidence="1">
        <text>N,N'-diacetylchitobiose + H2O = N-acetyl-beta-D-glucosaminyl-(1-&gt;4)-D-glucosamine + acetate</text>
        <dbReference type="Rhea" id="RHEA:27469"/>
        <dbReference type="ChEBI" id="CHEBI:15377"/>
        <dbReference type="ChEBI" id="CHEBI:28681"/>
        <dbReference type="ChEBI" id="CHEBI:30089"/>
        <dbReference type="ChEBI" id="CHEBI:59910"/>
        <dbReference type="EC" id="3.5.1.105"/>
    </reaction>
</comment>
<comment type="catalytic activity">
    <reaction evidence="1">
        <text>diacetylchitobiose-6'-phosphate + H2O = N'-monoacetylchitobiose-6'-phosphate + acetate</text>
        <dbReference type="Rhea" id="RHEA:35083"/>
        <dbReference type="ChEBI" id="CHEBI:15377"/>
        <dbReference type="ChEBI" id="CHEBI:30089"/>
        <dbReference type="ChEBI" id="CHEBI:64883"/>
        <dbReference type="ChEBI" id="CHEBI:71315"/>
    </reaction>
</comment>
<comment type="cofactor">
    <cofactor evidence="1">
        <name>Mg(2+)</name>
        <dbReference type="ChEBI" id="CHEBI:18420"/>
    </cofactor>
</comment>
<comment type="pathway">
    <text evidence="1">Glycan degradation; chitin degradation.</text>
</comment>
<comment type="subunit">
    <text evidence="1">Homodimer.</text>
</comment>
<comment type="subcellular location">
    <subcellularLocation>
        <location evidence="1">Cytoplasm</location>
    </subcellularLocation>
</comment>
<comment type="similarity">
    <text evidence="1">Belongs to the YdjC deacetylase family. ChbG subfamily.</text>
</comment>
<keyword id="KW-0119">Carbohydrate metabolism</keyword>
<keyword id="KW-0146">Chitin degradation</keyword>
<keyword id="KW-0963">Cytoplasm</keyword>
<keyword id="KW-0378">Hydrolase</keyword>
<keyword id="KW-0460">Magnesium</keyword>
<keyword id="KW-0479">Metal-binding</keyword>
<keyword id="KW-0624">Polysaccharide degradation</keyword>
<accession>B5BA58</accession>
<sequence length="252" mass="28027">MERVLIVNADDFGLSKGQNYGIVEAYRNGVVTSTTALVNGEAIDHAAQLSRELPALGVGMHFVLTLGKPVSEMPGLTRDGLLGKWIWQMAEEDTLPLDEIAHELACQYQRFIDVFGREPTHLDSHHHVHMFPQIFPIVARFAAQRGIALRIDRQTVLNADDLPSDLRSTQGFSSEFYGEEITEACFLRILDASAHRGEASLEVMCHPAFVDNIIRQSAYCYPRLTELEVLTSASLKAAIAERGYRPGSFLDI</sequence>
<organism>
    <name type="scientific">Salmonella paratyphi A (strain AKU_12601)</name>
    <dbReference type="NCBI Taxonomy" id="554290"/>
    <lineage>
        <taxon>Bacteria</taxon>
        <taxon>Pseudomonadati</taxon>
        <taxon>Pseudomonadota</taxon>
        <taxon>Gammaproteobacteria</taxon>
        <taxon>Enterobacterales</taxon>
        <taxon>Enterobacteriaceae</taxon>
        <taxon>Salmonella</taxon>
    </lineage>
</organism>
<protein>
    <recommendedName>
        <fullName evidence="1">Chitooligosaccharide deacetylase</fullName>
        <shortName evidence="1">COD</shortName>
        <ecNumber evidence="1">3.5.1.105</ecNumber>
    </recommendedName>
    <alternativeName>
        <fullName evidence="1">Chitin disaccharide deacetylase</fullName>
    </alternativeName>
    <alternativeName>
        <fullName evidence="1">Chitobiose deacetylase</fullName>
    </alternativeName>
    <alternativeName>
        <fullName evidence="1">Chitobiose-6P deacetylase</fullName>
    </alternativeName>
    <alternativeName>
        <fullName evidence="1">Chitotriose deacetylase</fullName>
    </alternativeName>
    <alternativeName>
        <fullName evidence="1">Chitotriose-6P deacetylase</fullName>
    </alternativeName>
</protein>
<evidence type="ECO:0000255" key="1">
    <source>
        <dbReference type="HAMAP-Rule" id="MF_01246"/>
    </source>
</evidence>
<name>CHBG_SALPK</name>